<protein>
    <recommendedName>
        <fullName evidence="1">tRNA dimethylallyltransferase</fullName>
        <ecNumber evidence="1">2.5.1.75</ecNumber>
    </recommendedName>
    <alternativeName>
        <fullName evidence="1">Dimethylallyl diphosphate:tRNA dimethylallyltransferase</fullName>
        <shortName evidence="1">DMAPP:tRNA dimethylallyltransferase</shortName>
        <shortName evidence="1">DMATase</shortName>
    </alternativeName>
    <alternativeName>
        <fullName evidence="1">Isopentenyl-diphosphate:tRNA isopentenyltransferase</fullName>
        <shortName evidence="1">IPP transferase</shortName>
        <shortName evidence="1">IPPT</shortName>
        <shortName evidence="1">IPTase</shortName>
    </alternativeName>
</protein>
<reference key="1">
    <citation type="journal article" date="2005" name="PLoS Biol.">
        <title>The genome sequence of Rickettsia felis identifies the first putative conjugative plasmid in an obligate intracellular parasite.</title>
        <authorList>
            <person name="Ogata H."/>
            <person name="Renesto P."/>
            <person name="Audic S."/>
            <person name="Robert C."/>
            <person name="Blanc G."/>
            <person name="Fournier P.-E."/>
            <person name="Parinello H."/>
            <person name="Claverie J.-M."/>
            <person name="Raoult D."/>
        </authorList>
    </citation>
    <scope>NUCLEOTIDE SEQUENCE [LARGE SCALE GENOMIC DNA]</scope>
    <source>
        <strain>ATCC VR-1525 / URRWXCal2</strain>
    </source>
</reference>
<keyword id="KW-0067">ATP-binding</keyword>
<keyword id="KW-0460">Magnesium</keyword>
<keyword id="KW-0547">Nucleotide-binding</keyword>
<keyword id="KW-0808">Transferase</keyword>
<keyword id="KW-0819">tRNA processing</keyword>
<accession>Q4ULK8</accession>
<dbReference type="EC" id="2.5.1.75" evidence="1"/>
<dbReference type="EMBL" id="CP000053">
    <property type="protein sequence ID" value="AAY61565.1"/>
    <property type="molecule type" value="Genomic_DNA"/>
</dbReference>
<dbReference type="SMR" id="Q4ULK8"/>
<dbReference type="STRING" id="315456.RF_0714"/>
<dbReference type="KEGG" id="rfe:RF_0714"/>
<dbReference type="eggNOG" id="COG0324">
    <property type="taxonomic scope" value="Bacteria"/>
</dbReference>
<dbReference type="HOGENOM" id="CLU_032616_0_1_5"/>
<dbReference type="OrthoDB" id="9776390at2"/>
<dbReference type="Proteomes" id="UP000008548">
    <property type="component" value="Chromosome"/>
</dbReference>
<dbReference type="GO" id="GO:0005524">
    <property type="term" value="F:ATP binding"/>
    <property type="evidence" value="ECO:0007669"/>
    <property type="project" value="UniProtKB-UniRule"/>
</dbReference>
<dbReference type="GO" id="GO:0052381">
    <property type="term" value="F:tRNA dimethylallyltransferase activity"/>
    <property type="evidence" value="ECO:0007669"/>
    <property type="project" value="UniProtKB-UniRule"/>
</dbReference>
<dbReference type="GO" id="GO:0006400">
    <property type="term" value="P:tRNA modification"/>
    <property type="evidence" value="ECO:0007669"/>
    <property type="project" value="TreeGrafter"/>
</dbReference>
<dbReference type="Gene3D" id="1.10.20.140">
    <property type="match status" value="1"/>
</dbReference>
<dbReference type="Gene3D" id="3.40.50.300">
    <property type="entry name" value="P-loop containing nucleotide triphosphate hydrolases"/>
    <property type="match status" value="1"/>
</dbReference>
<dbReference type="HAMAP" id="MF_00185">
    <property type="entry name" value="IPP_trans"/>
    <property type="match status" value="1"/>
</dbReference>
<dbReference type="InterPro" id="IPR039657">
    <property type="entry name" value="Dimethylallyltransferase"/>
</dbReference>
<dbReference type="InterPro" id="IPR018022">
    <property type="entry name" value="IPT"/>
</dbReference>
<dbReference type="InterPro" id="IPR027417">
    <property type="entry name" value="P-loop_NTPase"/>
</dbReference>
<dbReference type="NCBIfam" id="TIGR00174">
    <property type="entry name" value="miaA"/>
    <property type="match status" value="1"/>
</dbReference>
<dbReference type="PANTHER" id="PTHR11088">
    <property type="entry name" value="TRNA DIMETHYLALLYLTRANSFERASE"/>
    <property type="match status" value="1"/>
</dbReference>
<dbReference type="PANTHER" id="PTHR11088:SF60">
    <property type="entry name" value="TRNA DIMETHYLALLYLTRANSFERASE"/>
    <property type="match status" value="1"/>
</dbReference>
<dbReference type="Pfam" id="PF01715">
    <property type="entry name" value="IPPT"/>
    <property type="match status" value="1"/>
</dbReference>
<dbReference type="SUPFAM" id="SSF52540">
    <property type="entry name" value="P-loop containing nucleoside triphosphate hydrolases"/>
    <property type="match status" value="2"/>
</dbReference>
<sequence length="309" mass="35422">MTKKEIIILCGPTASGKSYLGHEFAKAYNGEIVNIDSMQVYKEISIITASPPKSYTAEVTYHLYNFLSITEDFSVVKYLKLATEKIKEITARGKLPILIGGTGLYINSLVFGYNNIPDISEDLREQVRNLHTEIGNIGLWNKLEELDTLAASKINQNDTQRLIRAYEVFLQTGKSIFSFQTLPKEQILSDFNFKIIFLNPERKFLYKTCDERLDKIFKEGAIDEIALIKKQFIPQDYSNLKAVGVKEILAYLDGNLTLDEALSAAQIRTRHYAKRQVTWFKKQIEDKTTLEYSNQEEFAQILNVIPAWH</sequence>
<evidence type="ECO:0000255" key="1">
    <source>
        <dbReference type="HAMAP-Rule" id="MF_00185"/>
    </source>
</evidence>
<proteinExistence type="inferred from homology"/>
<comment type="function">
    <text evidence="1">Catalyzes the transfer of a dimethylallyl group onto the adenine at position 37 in tRNAs that read codons beginning with uridine, leading to the formation of N6-(dimethylallyl)adenosine (i(6)A).</text>
</comment>
<comment type="catalytic activity">
    <reaction evidence="1">
        <text>adenosine(37) in tRNA + dimethylallyl diphosphate = N(6)-dimethylallyladenosine(37) in tRNA + diphosphate</text>
        <dbReference type="Rhea" id="RHEA:26482"/>
        <dbReference type="Rhea" id="RHEA-COMP:10162"/>
        <dbReference type="Rhea" id="RHEA-COMP:10375"/>
        <dbReference type="ChEBI" id="CHEBI:33019"/>
        <dbReference type="ChEBI" id="CHEBI:57623"/>
        <dbReference type="ChEBI" id="CHEBI:74411"/>
        <dbReference type="ChEBI" id="CHEBI:74415"/>
        <dbReference type="EC" id="2.5.1.75"/>
    </reaction>
</comment>
<comment type="cofactor">
    <cofactor evidence="1">
        <name>Mg(2+)</name>
        <dbReference type="ChEBI" id="CHEBI:18420"/>
    </cofactor>
</comment>
<comment type="subunit">
    <text evidence="1">Monomer.</text>
</comment>
<comment type="similarity">
    <text evidence="1">Belongs to the IPP transferase family.</text>
</comment>
<gene>
    <name evidence="1" type="primary">miaA</name>
    <name type="ordered locus">RF_0714</name>
</gene>
<feature type="chain" id="PRO_0000277988" description="tRNA dimethylallyltransferase">
    <location>
        <begin position="1"/>
        <end position="309"/>
    </location>
</feature>
<feature type="region of interest" description="Interaction with substrate tRNA" evidence="1">
    <location>
        <begin position="36"/>
        <end position="39"/>
    </location>
</feature>
<feature type="region of interest" description="Interaction with substrate tRNA" evidence="1">
    <location>
        <begin position="160"/>
        <end position="164"/>
    </location>
</feature>
<feature type="binding site" evidence="1">
    <location>
        <begin position="11"/>
        <end position="18"/>
    </location>
    <ligand>
        <name>ATP</name>
        <dbReference type="ChEBI" id="CHEBI:30616"/>
    </ligand>
</feature>
<feature type="binding site" evidence="1">
    <location>
        <begin position="13"/>
        <end position="18"/>
    </location>
    <ligand>
        <name>substrate</name>
    </ligand>
</feature>
<feature type="site" description="Interaction with substrate tRNA" evidence="1">
    <location>
        <position position="102"/>
    </location>
</feature>
<feature type="site" description="Interaction with substrate tRNA" evidence="1">
    <location>
        <position position="124"/>
    </location>
</feature>
<organism>
    <name type="scientific">Rickettsia felis (strain ATCC VR-1525 / URRWXCal2)</name>
    <name type="common">Rickettsia azadi</name>
    <dbReference type="NCBI Taxonomy" id="315456"/>
    <lineage>
        <taxon>Bacteria</taxon>
        <taxon>Pseudomonadati</taxon>
        <taxon>Pseudomonadota</taxon>
        <taxon>Alphaproteobacteria</taxon>
        <taxon>Rickettsiales</taxon>
        <taxon>Rickettsiaceae</taxon>
        <taxon>Rickettsieae</taxon>
        <taxon>Rickettsia</taxon>
        <taxon>spotted fever group</taxon>
    </lineage>
</organism>
<name>MIAA_RICFE</name>